<keyword id="KW-0150">Chloroplast</keyword>
<keyword id="KW-0472">Membrane</keyword>
<keyword id="KW-0520">NAD</keyword>
<keyword id="KW-0521">NADP</keyword>
<keyword id="KW-0934">Plastid</keyword>
<keyword id="KW-0618">Plastoquinone</keyword>
<keyword id="KW-0874">Quinone</keyword>
<keyword id="KW-0793">Thylakoid</keyword>
<keyword id="KW-1278">Translocase</keyword>
<keyword id="KW-0812">Transmembrane</keyword>
<keyword id="KW-1133">Transmembrane helix</keyword>
<keyword id="KW-0813">Transport</keyword>
<dbReference type="EC" id="7.1.1.-"/>
<dbReference type="EMBL" id="AF166114">
    <property type="protein sequence ID" value="AAF43885.1"/>
    <property type="molecule type" value="Genomic_DNA"/>
</dbReference>
<dbReference type="RefSeq" id="NP_038447.1">
    <property type="nucleotide sequence ID" value="NC_002186.1"/>
</dbReference>
<dbReference type="SMR" id="Q9MUL3"/>
<dbReference type="GeneID" id="800907"/>
<dbReference type="GO" id="GO:0009535">
    <property type="term" value="C:chloroplast thylakoid membrane"/>
    <property type="evidence" value="ECO:0007669"/>
    <property type="project" value="UniProtKB-SubCell"/>
</dbReference>
<dbReference type="GO" id="GO:0008137">
    <property type="term" value="F:NADH dehydrogenase (ubiquinone) activity"/>
    <property type="evidence" value="ECO:0007669"/>
    <property type="project" value="InterPro"/>
</dbReference>
<dbReference type="GO" id="GO:0048038">
    <property type="term" value="F:quinone binding"/>
    <property type="evidence" value="ECO:0007669"/>
    <property type="project" value="UniProtKB-KW"/>
</dbReference>
<dbReference type="Gene3D" id="1.20.120.1200">
    <property type="entry name" value="NADH-ubiquinone/plastoquinone oxidoreductase chain 6, subunit NuoJ"/>
    <property type="match status" value="1"/>
</dbReference>
<dbReference type="InterPro" id="IPR001457">
    <property type="entry name" value="NADH_UbQ/plastoQ_OxRdtase_su6"/>
</dbReference>
<dbReference type="InterPro" id="IPR042106">
    <property type="entry name" value="Nuo/plastoQ_OxRdtase_6_NuoJ"/>
</dbReference>
<dbReference type="NCBIfam" id="NF005163">
    <property type="entry name" value="PRK06638.1-3"/>
    <property type="match status" value="1"/>
</dbReference>
<dbReference type="PANTHER" id="PTHR33269">
    <property type="entry name" value="NADH-UBIQUINONE OXIDOREDUCTASE CHAIN 6"/>
    <property type="match status" value="1"/>
</dbReference>
<dbReference type="PANTHER" id="PTHR33269:SF17">
    <property type="entry name" value="NADH-UBIQUINONE OXIDOREDUCTASE CHAIN 6"/>
    <property type="match status" value="1"/>
</dbReference>
<dbReference type="Pfam" id="PF00499">
    <property type="entry name" value="Oxidored_q3"/>
    <property type="match status" value="1"/>
</dbReference>
<protein>
    <recommendedName>
        <fullName>NAD(P)H-quinone oxidoreductase subunit 6, chloroplastic</fullName>
        <ecNumber>7.1.1.-</ecNumber>
    </recommendedName>
    <alternativeName>
        <fullName>NAD(P)H dehydrogenase subunit 6</fullName>
    </alternativeName>
    <alternativeName>
        <fullName>NADH-plastoquinone oxidoreductase subunit 6</fullName>
    </alternativeName>
</protein>
<accession>Q9MUL3</accession>
<evidence type="ECO:0000250" key="1"/>
<evidence type="ECO:0000255" key="2"/>
<evidence type="ECO:0000305" key="3"/>
<geneLocation type="chloroplast"/>
<name>NU6C_MESVI</name>
<proteinExistence type="inferred from homology"/>
<gene>
    <name type="primary">ndhG</name>
</gene>
<feature type="chain" id="PRO_0000118357" description="NAD(P)H-quinone oxidoreductase subunit 6, chloroplastic">
    <location>
        <begin position="1"/>
        <end position="189"/>
    </location>
</feature>
<feature type="transmembrane region" description="Helical" evidence="2">
    <location>
        <begin position="10"/>
        <end position="30"/>
    </location>
</feature>
<feature type="transmembrane region" description="Helical" evidence="2">
    <location>
        <begin position="32"/>
        <end position="52"/>
    </location>
</feature>
<feature type="transmembrane region" description="Helical" evidence="2">
    <location>
        <begin position="61"/>
        <end position="81"/>
    </location>
</feature>
<feature type="transmembrane region" description="Helical" evidence="2">
    <location>
        <begin position="98"/>
        <end position="118"/>
    </location>
</feature>
<feature type="transmembrane region" description="Helical" evidence="2">
    <location>
        <begin position="144"/>
        <end position="164"/>
    </location>
</feature>
<organism>
    <name type="scientific">Mesostigma viride</name>
    <name type="common">Green alga</name>
    <dbReference type="NCBI Taxonomy" id="41882"/>
    <lineage>
        <taxon>Eukaryota</taxon>
        <taxon>Viridiplantae</taxon>
        <taxon>Streptophyta</taxon>
        <taxon>Mesostigmatophyceae</taxon>
        <taxon>Mesostigmatales</taxon>
        <taxon>Mesostigmataceae</taxon>
        <taxon>Mesostigma</taxon>
    </lineage>
</organism>
<sequence length="189" mass="20707">MSFSEQIQNLSLLLLEIGTIIGALGVVLLPNILYSGFLLGGVLICIAGIYLLLNAEFIAAAQVLIYVGAINVIILFAIMLVNKIENLNPSNNQMMRNGLSSFICFSFFILLSNMIFDTQWIDTVGVSTKYSISIIGNHIFSDFLLPFEIVSVLLLVTLVGAVFIARKEDASEIEISKISFLNLPDPSKK</sequence>
<comment type="function">
    <text evidence="1">NDH shuttles electrons from NAD(P)H:plastoquinone, via FMN and iron-sulfur (Fe-S) centers, to quinones in the photosynthetic chain and possibly in a chloroplast respiratory chain. The immediate electron acceptor for the enzyme in this species is believed to be plastoquinone. Couples the redox reaction to proton translocation, and thus conserves the redox energy in a proton gradient (By similarity).</text>
</comment>
<comment type="catalytic activity">
    <reaction>
        <text>a plastoquinone + NADH + (n+1) H(+)(in) = a plastoquinol + NAD(+) + n H(+)(out)</text>
        <dbReference type="Rhea" id="RHEA:42608"/>
        <dbReference type="Rhea" id="RHEA-COMP:9561"/>
        <dbReference type="Rhea" id="RHEA-COMP:9562"/>
        <dbReference type="ChEBI" id="CHEBI:15378"/>
        <dbReference type="ChEBI" id="CHEBI:17757"/>
        <dbReference type="ChEBI" id="CHEBI:57540"/>
        <dbReference type="ChEBI" id="CHEBI:57945"/>
        <dbReference type="ChEBI" id="CHEBI:62192"/>
    </reaction>
</comment>
<comment type="catalytic activity">
    <reaction>
        <text>a plastoquinone + NADPH + (n+1) H(+)(in) = a plastoquinol + NADP(+) + n H(+)(out)</text>
        <dbReference type="Rhea" id="RHEA:42612"/>
        <dbReference type="Rhea" id="RHEA-COMP:9561"/>
        <dbReference type="Rhea" id="RHEA-COMP:9562"/>
        <dbReference type="ChEBI" id="CHEBI:15378"/>
        <dbReference type="ChEBI" id="CHEBI:17757"/>
        <dbReference type="ChEBI" id="CHEBI:57783"/>
        <dbReference type="ChEBI" id="CHEBI:58349"/>
        <dbReference type="ChEBI" id="CHEBI:62192"/>
    </reaction>
</comment>
<comment type="subunit">
    <text evidence="1">NDH is composed of at least 16 different subunits, 5 of which are encoded in the nucleus.</text>
</comment>
<comment type="subcellular location">
    <subcellularLocation>
        <location evidence="1">Plastid</location>
        <location evidence="1">Chloroplast thylakoid membrane</location>
        <topology evidence="1">Multi-pass membrane protein</topology>
    </subcellularLocation>
</comment>
<comment type="similarity">
    <text evidence="3">Belongs to the complex I subunit 6 family.</text>
</comment>
<reference key="1">
    <citation type="journal article" date="2000" name="Nature">
        <title>Ancestral chloroplast genome in Mesostigma viride reveals an early branch of green plant evolution.</title>
        <authorList>
            <person name="Lemieux C."/>
            <person name="Otis C."/>
            <person name="Turmel M."/>
        </authorList>
    </citation>
    <scope>NUCLEOTIDE SEQUENCE [LARGE SCALE GENOMIC DNA]</scope>
    <source>
        <strain>NIES-296 / KY-14 / CCMP 2046</strain>
    </source>
</reference>